<keyword id="KW-0687">Ribonucleoprotein</keyword>
<keyword id="KW-0689">Ribosomal protein</keyword>
<keyword id="KW-0694">RNA-binding</keyword>
<keyword id="KW-0699">rRNA-binding</keyword>
<keyword id="KW-0820">tRNA-binding</keyword>
<protein>
    <recommendedName>
        <fullName evidence="1">Small ribosomal subunit protein uS7</fullName>
    </recommendedName>
    <alternativeName>
        <fullName evidence="2">30S ribosomal protein S7</fullName>
    </alternativeName>
</protein>
<organism>
    <name type="scientific">Treponema pallidum subsp. pallidum (strain SS14)</name>
    <dbReference type="NCBI Taxonomy" id="455434"/>
    <lineage>
        <taxon>Bacteria</taxon>
        <taxon>Pseudomonadati</taxon>
        <taxon>Spirochaetota</taxon>
        <taxon>Spirochaetia</taxon>
        <taxon>Spirochaetales</taxon>
        <taxon>Treponemataceae</taxon>
        <taxon>Treponema</taxon>
    </lineage>
</organism>
<dbReference type="EMBL" id="CP000805">
    <property type="protein sequence ID" value="ACD70670.1"/>
    <property type="molecule type" value="Genomic_DNA"/>
</dbReference>
<dbReference type="RefSeq" id="WP_010881692.1">
    <property type="nucleotide sequence ID" value="NC_021508.1"/>
</dbReference>
<dbReference type="SMR" id="B2S2J1"/>
<dbReference type="GeneID" id="93876036"/>
<dbReference type="KEGG" id="tpp:TPASS_0244"/>
<dbReference type="PATRIC" id="fig|455434.6.peg.249"/>
<dbReference type="Proteomes" id="UP000001202">
    <property type="component" value="Chromosome"/>
</dbReference>
<dbReference type="GO" id="GO:0015935">
    <property type="term" value="C:small ribosomal subunit"/>
    <property type="evidence" value="ECO:0007669"/>
    <property type="project" value="InterPro"/>
</dbReference>
<dbReference type="GO" id="GO:0019843">
    <property type="term" value="F:rRNA binding"/>
    <property type="evidence" value="ECO:0007669"/>
    <property type="project" value="UniProtKB-UniRule"/>
</dbReference>
<dbReference type="GO" id="GO:0003735">
    <property type="term" value="F:structural constituent of ribosome"/>
    <property type="evidence" value="ECO:0007669"/>
    <property type="project" value="InterPro"/>
</dbReference>
<dbReference type="GO" id="GO:0000049">
    <property type="term" value="F:tRNA binding"/>
    <property type="evidence" value="ECO:0007669"/>
    <property type="project" value="UniProtKB-UniRule"/>
</dbReference>
<dbReference type="GO" id="GO:0006412">
    <property type="term" value="P:translation"/>
    <property type="evidence" value="ECO:0007669"/>
    <property type="project" value="UniProtKB-UniRule"/>
</dbReference>
<dbReference type="CDD" id="cd14869">
    <property type="entry name" value="uS7_Bacteria"/>
    <property type="match status" value="1"/>
</dbReference>
<dbReference type="FunFam" id="1.10.455.10:FF:000001">
    <property type="entry name" value="30S ribosomal protein S7"/>
    <property type="match status" value="1"/>
</dbReference>
<dbReference type="Gene3D" id="1.10.455.10">
    <property type="entry name" value="Ribosomal protein S7 domain"/>
    <property type="match status" value="1"/>
</dbReference>
<dbReference type="HAMAP" id="MF_00480_B">
    <property type="entry name" value="Ribosomal_uS7_B"/>
    <property type="match status" value="1"/>
</dbReference>
<dbReference type="InterPro" id="IPR000235">
    <property type="entry name" value="Ribosomal_uS7"/>
</dbReference>
<dbReference type="InterPro" id="IPR005717">
    <property type="entry name" value="Ribosomal_uS7_bac/org-type"/>
</dbReference>
<dbReference type="InterPro" id="IPR020606">
    <property type="entry name" value="Ribosomal_uS7_CS"/>
</dbReference>
<dbReference type="InterPro" id="IPR023798">
    <property type="entry name" value="Ribosomal_uS7_dom"/>
</dbReference>
<dbReference type="InterPro" id="IPR036823">
    <property type="entry name" value="Ribosomal_uS7_dom_sf"/>
</dbReference>
<dbReference type="NCBIfam" id="TIGR01029">
    <property type="entry name" value="rpsG_bact"/>
    <property type="match status" value="1"/>
</dbReference>
<dbReference type="PANTHER" id="PTHR11205">
    <property type="entry name" value="RIBOSOMAL PROTEIN S7"/>
    <property type="match status" value="1"/>
</dbReference>
<dbReference type="Pfam" id="PF00177">
    <property type="entry name" value="Ribosomal_S7"/>
    <property type="match status" value="1"/>
</dbReference>
<dbReference type="PIRSF" id="PIRSF002122">
    <property type="entry name" value="RPS7p_RPS7a_RPS5e_RPS7o"/>
    <property type="match status" value="1"/>
</dbReference>
<dbReference type="SUPFAM" id="SSF47973">
    <property type="entry name" value="Ribosomal protein S7"/>
    <property type="match status" value="1"/>
</dbReference>
<dbReference type="PROSITE" id="PS00052">
    <property type="entry name" value="RIBOSOMAL_S7"/>
    <property type="match status" value="1"/>
</dbReference>
<feature type="chain" id="PRO_1000126020" description="Small ribosomal subunit protein uS7">
    <location>
        <begin position="1"/>
        <end position="156"/>
    </location>
</feature>
<accession>B2S2J1</accession>
<gene>
    <name evidence="1" type="primary">rpsG</name>
    <name type="ordered locus">TPASS_0244</name>
</gene>
<sequence length="156" mass="17882">MGRKRRVSRRVPPPDARYNSVVLAKFICRMMLAGKKATAVGIMYDCLERIQQRTGEEPLPVFTKALENVKPAVEVKSRRVGGSTYQVPMEIRETRREALGMRWIIGAARRRSGRGMSERLAAEILDAYHSTGTAFKRKEDTHRMAEANKAFSHYRW</sequence>
<reference key="1">
    <citation type="journal article" date="2008" name="BMC Microbiol.">
        <title>Complete genome sequence of Treponema pallidum ssp. pallidum strain SS14 determined with oligonucleotide arrays.</title>
        <authorList>
            <person name="Matejkova P."/>
            <person name="Strouhal M."/>
            <person name="Smajs D."/>
            <person name="Norris S.J."/>
            <person name="Palzkill T."/>
            <person name="Petrosino J.F."/>
            <person name="Sodergren E."/>
            <person name="Norton J.E."/>
            <person name="Singh J."/>
            <person name="Richmond T.A."/>
            <person name="Molla M.N."/>
            <person name="Albert T.J."/>
            <person name="Weinstock G.M."/>
        </authorList>
    </citation>
    <scope>NUCLEOTIDE SEQUENCE [LARGE SCALE GENOMIC DNA]</scope>
    <source>
        <strain>SS14</strain>
    </source>
</reference>
<name>RS7_TREPS</name>
<comment type="function">
    <text evidence="1">One of the primary rRNA binding proteins, it binds directly to 16S rRNA where it nucleates assembly of the head domain of the 30S subunit. Is located at the subunit interface close to the decoding center, probably blocks exit of the E-site tRNA.</text>
</comment>
<comment type="subunit">
    <text evidence="1">Part of the 30S ribosomal subunit. Contacts proteins S9 and S11.</text>
</comment>
<comment type="similarity">
    <text evidence="1">Belongs to the universal ribosomal protein uS7 family.</text>
</comment>
<evidence type="ECO:0000255" key="1">
    <source>
        <dbReference type="HAMAP-Rule" id="MF_00480"/>
    </source>
</evidence>
<evidence type="ECO:0000305" key="2"/>
<proteinExistence type="inferred from homology"/>